<evidence type="ECO:0000255" key="1"/>
<evidence type="ECO:0000305" key="2"/>
<accession>Q6FWH9</accession>
<keyword id="KW-1185">Reference proteome</keyword>
<keyword id="KW-0732">Signal</keyword>
<organism>
    <name type="scientific">Candida glabrata (strain ATCC 2001 / BCRC 20586 / JCM 3761 / NBRC 0622 / NRRL Y-65 / CBS 138)</name>
    <name type="common">Yeast</name>
    <name type="synonym">Nakaseomyces glabratus</name>
    <dbReference type="NCBI Taxonomy" id="284593"/>
    <lineage>
        <taxon>Eukaryota</taxon>
        <taxon>Fungi</taxon>
        <taxon>Dikarya</taxon>
        <taxon>Ascomycota</taxon>
        <taxon>Saccharomycotina</taxon>
        <taxon>Saccharomycetes</taxon>
        <taxon>Saccharomycetales</taxon>
        <taxon>Saccharomycetaceae</taxon>
        <taxon>Nakaseomyces</taxon>
    </lineage>
</organism>
<name>AIM6_CANGA</name>
<sequence length="411" mass="46744">MIPFTAQYLLVCGYVILLGVILLERSGYSAFGLLEKRQDYFHNSHAIMLSSRQDLGVSGPALYELFEKHLLDAYRIPGRYPGGISTLYDTFSEYVFKGTSHENCSVETSAVAKLTRDVTPLPIHSHNDYWRDVPLLKGLAYGSVSTEADVWVHPHKDHPYNSSTDKLEDYVLAVGHDEDYIDPLRKTLEKLYTDPLQSLLEGVNCGKSNNSKTQKNGVFYTANHIPLFFYIDFKSDDNILTYKLLLEKYFTQLIQAGYLTYYDMDTGKIIQGQVTVIMTGNYPNNTDVLDNGKADGYFGDRKRYLLQDANLLELNEESAKMAVTASTSLSEILKMVGSSNLKVIMRGHLDKEEITAIKKYIDNAHSFDLKTRIWGVPSWPRKTMKRLWKQQIEDLNSDFLNVDDLKAAAMF</sequence>
<protein>
    <recommendedName>
        <fullName>Altered inheritance of mitochondria protein 6</fullName>
    </recommendedName>
</protein>
<comment type="similarity">
    <text evidence="2">Belongs to the AIM6 family.</text>
</comment>
<proteinExistence type="inferred from homology"/>
<feature type="signal peptide" evidence="1">
    <location>
        <begin position="1"/>
        <end position="29"/>
    </location>
</feature>
<feature type="chain" id="PRO_0000408706" description="Altered inheritance of mitochondria protein 6">
    <location>
        <begin position="30"/>
        <end position="411"/>
    </location>
</feature>
<dbReference type="EMBL" id="CR380949">
    <property type="protein sequence ID" value="CAG58321.1"/>
    <property type="molecule type" value="Genomic_DNA"/>
</dbReference>
<dbReference type="RefSeq" id="XP_445415.1">
    <property type="nucleotide sequence ID" value="XM_445415.1"/>
</dbReference>
<dbReference type="FunCoup" id="Q6FWH9">
    <property type="interactions" value="18"/>
</dbReference>
<dbReference type="KEGG" id="cgr:2886874"/>
<dbReference type="eggNOG" id="ENOG502QVA8">
    <property type="taxonomic scope" value="Eukaryota"/>
</dbReference>
<dbReference type="HOGENOM" id="CLU_031561_1_1_1"/>
<dbReference type="InParanoid" id="Q6FWH9"/>
<dbReference type="OMA" id="HANYLTT"/>
<dbReference type="Proteomes" id="UP000002428">
    <property type="component" value="Chromosome C"/>
</dbReference>
<dbReference type="GO" id="GO:0008081">
    <property type="term" value="F:phosphoric diester hydrolase activity"/>
    <property type="evidence" value="ECO:0007669"/>
    <property type="project" value="InterPro"/>
</dbReference>
<dbReference type="GO" id="GO:0006629">
    <property type="term" value="P:lipid metabolic process"/>
    <property type="evidence" value="ECO:0007669"/>
    <property type="project" value="InterPro"/>
</dbReference>
<dbReference type="InterPro" id="IPR051236">
    <property type="entry name" value="HAT_RTT109-like"/>
</dbReference>
<dbReference type="InterPro" id="IPR017946">
    <property type="entry name" value="PLC-like_Pdiesterase_TIM-brl"/>
</dbReference>
<dbReference type="PANTHER" id="PTHR31571">
    <property type="entry name" value="ALTERED INHERITANCE OF MITOCHONDRIA PROTEIN 6"/>
    <property type="match status" value="1"/>
</dbReference>
<dbReference type="PANTHER" id="PTHR31571:SF1">
    <property type="entry name" value="ALTERED INHERITANCE OF MITOCHONDRIA PROTEIN 6"/>
    <property type="match status" value="1"/>
</dbReference>
<dbReference type="SUPFAM" id="SSF51695">
    <property type="entry name" value="PLC-like phosphodiesterases"/>
    <property type="match status" value="1"/>
</dbReference>
<reference key="1">
    <citation type="journal article" date="2004" name="Nature">
        <title>Genome evolution in yeasts.</title>
        <authorList>
            <person name="Dujon B."/>
            <person name="Sherman D."/>
            <person name="Fischer G."/>
            <person name="Durrens P."/>
            <person name="Casaregola S."/>
            <person name="Lafontaine I."/>
            <person name="de Montigny J."/>
            <person name="Marck C."/>
            <person name="Neuveglise C."/>
            <person name="Talla E."/>
            <person name="Goffard N."/>
            <person name="Frangeul L."/>
            <person name="Aigle M."/>
            <person name="Anthouard V."/>
            <person name="Babour A."/>
            <person name="Barbe V."/>
            <person name="Barnay S."/>
            <person name="Blanchin S."/>
            <person name="Beckerich J.-M."/>
            <person name="Beyne E."/>
            <person name="Bleykasten C."/>
            <person name="Boisrame A."/>
            <person name="Boyer J."/>
            <person name="Cattolico L."/>
            <person name="Confanioleri F."/>
            <person name="de Daruvar A."/>
            <person name="Despons L."/>
            <person name="Fabre E."/>
            <person name="Fairhead C."/>
            <person name="Ferry-Dumazet H."/>
            <person name="Groppi A."/>
            <person name="Hantraye F."/>
            <person name="Hennequin C."/>
            <person name="Jauniaux N."/>
            <person name="Joyet P."/>
            <person name="Kachouri R."/>
            <person name="Kerrest A."/>
            <person name="Koszul R."/>
            <person name="Lemaire M."/>
            <person name="Lesur I."/>
            <person name="Ma L."/>
            <person name="Muller H."/>
            <person name="Nicaud J.-M."/>
            <person name="Nikolski M."/>
            <person name="Oztas S."/>
            <person name="Ozier-Kalogeropoulos O."/>
            <person name="Pellenz S."/>
            <person name="Potier S."/>
            <person name="Richard G.-F."/>
            <person name="Straub M.-L."/>
            <person name="Suleau A."/>
            <person name="Swennen D."/>
            <person name="Tekaia F."/>
            <person name="Wesolowski-Louvel M."/>
            <person name="Westhof E."/>
            <person name="Wirth B."/>
            <person name="Zeniou-Meyer M."/>
            <person name="Zivanovic Y."/>
            <person name="Bolotin-Fukuhara M."/>
            <person name="Thierry A."/>
            <person name="Bouchier C."/>
            <person name="Caudron B."/>
            <person name="Scarpelli C."/>
            <person name="Gaillardin C."/>
            <person name="Weissenbach J."/>
            <person name="Wincker P."/>
            <person name="Souciet J.-L."/>
        </authorList>
    </citation>
    <scope>NUCLEOTIDE SEQUENCE [LARGE SCALE GENOMIC DNA]</scope>
    <source>
        <strain>ATCC 2001 / BCRC 20586 / JCM 3761 / NBRC 0622 / NRRL Y-65 / CBS 138</strain>
    </source>
</reference>
<gene>
    <name type="primary">AIM6</name>
    <name type="ordered locus">CAGL0C05533g</name>
</gene>